<reference key="1">
    <citation type="submission" date="2006-08" db="EMBL/GenBank/DDBJ databases">
        <title>Complete sequence of chromosome 1 of Burkholderia cenocepacia HI2424.</title>
        <authorList>
            <person name="Copeland A."/>
            <person name="Lucas S."/>
            <person name="Lapidus A."/>
            <person name="Barry K."/>
            <person name="Detter J.C."/>
            <person name="Glavina del Rio T."/>
            <person name="Hammon N."/>
            <person name="Israni S."/>
            <person name="Pitluck S."/>
            <person name="Chain P."/>
            <person name="Malfatti S."/>
            <person name="Shin M."/>
            <person name="Vergez L."/>
            <person name="Schmutz J."/>
            <person name="Larimer F."/>
            <person name="Land M."/>
            <person name="Hauser L."/>
            <person name="Kyrpides N."/>
            <person name="Kim E."/>
            <person name="LiPuma J.J."/>
            <person name="Gonzalez C.F."/>
            <person name="Konstantinidis K."/>
            <person name="Tiedje J.M."/>
            <person name="Richardson P."/>
        </authorList>
    </citation>
    <scope>NUCLEOTIDE SEQUENCE [LARGE SCALE GENOMIC DNA]</scope>
    <source>
        <strain>HI2424</strain>
    </source>
</reference>
<gene>
    <name evidence="1" type="primary">thiC</name>
    <name type="ordered locus">Bcen2424_1223</name>
</gene>
<feature type="chain" id="PRO_1000004739" description="Phosphomethylpyrimidine synthase">
    <location>
        <begin position="1"/>
        <end position="643"/>
    </location>
</feature>
<feature type="binding site" evidence="1">
    <location>
        <position position="248"/>
    </location>
    <ligand>
        <name>substrate</name>
    </ligand>
</feature>
<feature type="binding site" evidence="1">
    <location>
        <position position="277"/>
    </location>
    <ligand>
        <name>substrate</name>
    </ligand>
</feature>
<feature type="binding site" evidence="1">
    <location>
        <position position="306"/>
    </location>
    <ligand>
        <name>substrate</name>
    </ligand>
</feature>
<feature type="binding site" evidence="1">
    <location>
        <position position="342"/>
    </location>
    <ligand>
        <name>substrate</name>
    </ligand>
</feature>
<feature type="binding site" evidence="1">
    <location>
        <begin position="362"/>
        <end position="364"/>
    </location>
    <ligand>
        <name>substrate</name>
    </ligand>
</feature>
<feature type="binding site" evidence="1">
    <location>
        <begin position="403"/>
        <end position="406"/>
    </location>
    <ligand>
        <name>substrate</name>
    </ligand>
</feature>
<feature type="binding site" evidence="1">
    <location>
        <position position="442"/>
    </location>
    <ligand>
        <name>substrate</name>
    </ligand>
</feature>
<feature type="binding site" evidence="1">
    <location>
        <position position="446"/>
    </location>
    <ligand>
        <name>Zn(2+)</name>
        <dbReference type="ChEBI" id="CHEBI:29105"/>
    </ligand>
</feature>
<feature type="binding site" evidence="1">
    <location>
        <position position="469"/>
    </location>
    <ligand>
        <name>substrate</name>
    </ligand>
</feature>
<feature type="binding site" evidence="1">
    <location>
        <position position="510"/>
    </location>
    <ligand>
        <name>Zn(2+)</name>
        <dbReference type="ChEBI" id="CHEBI:29105"/>
    </ligand>
</feature>
<feature type="binding site" evidence="1">
    <location>
        <position position="590"/>
    </location>
    <ligand>
        <name>[4Fe-4S] cluster</name>
        <dbReference type="ChEBI" id="CHEBI:49883"/>
        <note>4Fe-4S-S-AdoMet</note>
    </ligand>
</feature>
<feature type="binding site" evidence="1">
    <location>
        <position position="593"/>
    </location>
    <ligand>
        <name>[4Fe-4S] cluster</name>
        <dbReference type="ChEBI" id="CHEBI:49883"/>
        <note>4Fe-4S-S-AdoMet</note>
    </ligand>
</feature>
<feature type="binding site" evidence="1">
    <location>
        <position position="598"/>
    </location>
    <ligand>
        <name>[4Fe-4S] cluster</name>
        <dbReference type="ChEBI" id="CHEBI:49883"/>
        <note>4Fe-4S-S-AdoMet</note>
    </ligand>
</feature>
<evidence type="ECO:0000255" key="1">
    <source>
        <dbReference type="HAMAP-Rule" id="MF_00089"/>
    </source>
</evidence>
<proteinExistence type="inferred from homology"/>
<organism>
    <name type="scientific">Burkholderia cenocepacia (strain HI2424)</name>
    <dbReference type="NCBI Taxonomy" id="331272"/>
    <lineage>
        <taxon>Bacteria</taxon>
        <taxon>Pseudomonadati</taxon>
        <taxon>Pseudomonadota</taxon>
        <taxon>Betaproteobacteria</taxon>
        <taxon>Burkholderiales</taxon>
        <taxon>Burkholderiaceae</taxon>
        <taxon>Burkholderia</taxon>
        <taxon>Burkholderia cepacia complex</taxon>
    </lineage>
</organism>
<sequence length="643" mass="71130">MNANPKFLSADAHVDAAAVAPLPNSRKVYVTGSQPDIRVPMREITQADTPTGFGGEKNPPIYVYDTSGPYTDPDAKIDIRAGLPALRQRWIEARGDTEVLPGLSSQYGLERAADPATAELRFPGLHRNPRRAQPGKNVTQMHYARQGIITPEMEYIAIRENQRRAEYIESLKSSGPNGAKLAAMMGRQHPGQAFGAAAFGANALAEITPEFVRDEIARGRAIIPANINHPESEPMIIGRNFLVKINANIGNSAVTSSIGEEVDKMTWAIRWGGDTVMDLSTGKHIHETREWIIRNSPVPIGTVPIYQALEKVNGKAEDLTWEIFRDTLIEQAEQGVDYFTIHAGVRLQYVPLTANRMTGIVSRGGSIMAKWCLAHHKESFLYEHFEEICEIMKAYDVSFSLGDGLRPGSIYDANDEAQLGELKTLGELTQIAWKHDVQVMIEGPGHVPMQLIKENMDLQLDWCKEAPFYTLGPLTTDIAPGYDHITSGIGAAMIGWFGTAMLCYVTPKEHLGLPNKDDVKEGIITYKLAAHAADLAKGHPGAQVRDNALSKARFEFRWEDQFNIGLDPDKAREFHDETLPKDSAKVAHFCSMCGPHFCSMKITQDVREFAAQQGVSETEALKKGMEVKAVEFVKTGAEIYHRQ</sequence>
<comment type="function">
    <text evidence="1">Catalyzes the synthesis of the hydroxymethylpyrimidine phosphate (HMP-P) moiety of thiamine from aminoimidazole ribotide (AIR) in a radical S-adenosyl-L-methionine (SAM)-dependent reaction.</text>
</comment>
<comment type="catalytic activity">
    <reaction evidence="1">
        <text>5-amino-1-(5-phospho-beta-D-ribosyl)imidazole + S-adenosyl-L-methionine = 4-amino-2-methyl-5-(phosphooxymethyl)pyrimidine + CO + 5'-deoxyadenosine + formate + L-methionine + 3 H(+)</text>
        <dbReference type="Rhea" id="RHEA:24840"/>
        <dbReference type="ChEBI" id="CHEBI:15378"/>
        <dbReference type="ChEBI" id="CHEBI:15740"/>
        <dbReference type="ChEBI" id="CHEBI:17245"/>
        <dbReference type="ChEBI" id="CHEBI:17319"/>
        <dbReference type="ChEBI" id="CHEBI:57844"/>
        <dbReference type="ChEBI" id="CHEBI:58354"/>
        <dbReference type="ChEBI" id="CHEBI:59789"/>
        <dbReference type="ChEBI" id="CHEBI:137981"/>
        <dbReference type="EC" id="4.1.99.17"/>
    </reaction>
</comment>
<comment type="cofactor">
    <cofactor evidence="1">
        <name>[4Fe-4S] cluster</name>
        <dbReference type="ChEBI" id="CHEBI:49883"/>
    </cofactor>
    <text evidence="1">Binds 1 [4Fe-4S] cluster per subunit. The cluster is coordinated with 3 cysteines and an exchangeable S-adenosyl-L-methionine.</text>
</comment>
<comment type="pathway">
    <text evidence="1">Cofactor biosynthesis; thiamine diphosphate biosynthesis.</text>
</comment>
<comment type="subunit">
    <text evidence="1">Homodimer.</text>
</comment>
<comment type="similarity">
    <text evidence="1">Belongs to the ThiC family.</text>
</comment>
<name>THIC_BURCH</name>
<keyword id="KW-0004">4Fe-4S</keyword>
<keyword id="KW-0408">Iron</keyword>
<keyword id="KW-0411">Iron-sulfur</keyword>
<keyword id="KW-0456">Lyase</keyword>
<keyword id="KW-0479">Metal-binding</keyword>
<keyword id="KW-0949">S-adenosyl-L-methionine</keyword>
<keyword id="KW-0784">Thiamine biosynthesis</keyword>
<keyword id="KW-0862">Zinc</keyword>
<dbReference type="EC" id="4.1.99.17" evidence="1"/>
<dbReference type="EMBL" id="CP000458">
    <property type="protein sequence ID" value="ABK07975.1"/>
    <property type="molecule type" value="Genomic_DNA"/>
</dbReference>
<dbReference type="RefSeq" id="WP_011545021.1">
    <property type="nucleotide sequence ID" value="NC_008542.1"/>
</dbReference>
<dbReference type="SMR" id="A0K648"/>
<dbReference type="KEGG" id="bch:Bcen2424_1223"/>
<dbReference type="HOGENOM" id="CLU_013181_2_1_4"/>
<dbReference type="UniPathway" id="UPA00060"/>
<dbReference type="GO" id="GO:0005829">
    <property type="term" value="C:cytosol"/>
    <property type="evidence" value="ECO:0007669"/>
    <property type="project" value="TreeGrafter"/>
</dbReference>
<dbReference type="GO" id="GO:0051539">
    <property type="term" value="F:4 iron, 4 sulfur cluster binding"/>
    <property type="evidence" value="ECO:0007669"/>
    <property type="project" value="UniProtKB-KW"/>
</dbReference>
<dbReference type="GO" id="GO:0016830">
    <property type="term" value="F:carbon-carbon lyase activity"/>
    <property type="evidence" value="ECO:0007669"/>
    <property type="project" value="InterPro"/>
</dbReference>
<dbReference type="GO" id="GO:0008270">
    <property type="term" value="F:zinc ion binding"/>
    <property type="evidence" value="ECO:0007669"/>
    <property type="project" value="UniProtKB-UniRule"/>
</dbReference>
<dbReference type="GO" id="GO:0009228">
    <property type="term" value="P:thiamine biosynthetic process"/>
    <property type="evidence" value="ECO:0007669"/>
    <property type="project" value="UniProtKB-KW"/>
</dbReference>
<dbReference type="GO" id="GO:0009229">
    <property type="term" value="P:thiamine diphosphate biosynthetic process"/>
    <property type="evidence" value="ECO:0007669"/>
    <property type="project" value="UniProtKB-UniRule"/>
</dbReference>
<dbReference type="FunFam" id="3.20.20.540:FF:000001">
    <property type="entry name" value="Phosphomethylpyrimidine synthase"/>
    <property type="match status" value="1"/>
</dbReference>
<dbReference type="Gene3D" id="6.10.250.620">
    <property type="match status" value="1"/>
</dbReference>
<dbReference type="Gene3D" id="3.20.20.540">
    <property type="entry name" value="Radical SAM ThiC family, central domain"/>
    <property type="match status" value="1"/>
</dbReference>
<dbReference type="HAMAP" id="MF_00089">
    <property type="entry name" value="ThiC"/>
    <property type="match status" value="1"/>
</dbReference>
<dbReference type="InterPro" id="IPR037509">
    <property type="entry name" value="ThiC"/>
</dbReference>
<dbReference type="InterPro" id="IPR025747">
    <property type="entry name" value="ThiC-associated_dom"/>
</dbReference>
<dbReference type="InterPro" id="IPR038521">
    <property type="entry name" value="ThiC/Bza_core_dom"/>
</dbReference>
<dbReference type="InterPro" id="IPR002817">
    <property type="entry name" value="ThiC/BzaA/B"/>
</dbReference>
<dbReference type="NCBIfam" id="NF006763">
    <property type="entry name" value="PRK09284.1"/>
    <property type="match status" value="1"/>
</dbReference>
<dbReference type="NCBIfam" id="NF009895">
    <property type="entry name" value="PRK13352.1"/>
    <property type="match status" value="1"/>
</dbReference>
<dbReference type="NCBIfam" id="TIGR00190">
    <property type="entry name" value="thiC"/>
    <property type="match status" value="1"/>
</dbReference>
<dbReference type="PANTHER" id="PTHR30557:SF1">
    <property type="entry name" value="PHOSPHOMETHYLPYRIMIDINE SYNTHASE, CHLOROPLASTIC"/>
    <property type="match status" value="1"/>
</dbReference>
<dbReference type="PANTHER" id="PTHR30557">
    <property type="entry name" value="THIAMINE BIOSYNTHESIS PROTEIN THIC"/>
    <property type="match status" value="1"/>
</dbReference>
<dbReference type="Pfam" id="PF13667">
    <property type="entry name" value="ThiC-associated"/>
    <property type="match status" value="1"/>
</dbReference>
<dbReference type="Pfam" id="PF01964">
    <property type="entry name" value="ThiC_Rad_SAM"/>
    <property type="match status" value="1"/>
</dbReference>
<dbReference type="SFLD" id="SFLDF00407">
    <property type="entry name" value="phosphomethylpyrimidine_syntha"/>
    <property type="match status" value="1"/>
</dbReference>
<dbReference type="SFLD" id="SFLDG01114">
    <property type="entry name" value="phosphomethylpyrimidine_syntha"/>
    <property type="match status" value="1"/>
</dbReference>
<dbReference type="SFLD" id="SFLDS00113">
    <property type="entry name" value="Radical_SAM_Phosphomethylpyrim"/>
    <property type="match status" value="1"/>
</dbReference>
<accession>A0K648</accession>
<protein>
    <recommendedName>
        <fullName evidence="1">Phosphomethylpyrimidine synthase</fullName>
        <ecNumber evidence="1">4.1.99.17</ecNumber>
    </recommendedName>
    <alternativeName>
        <fullName evidence="1">Hydroxymethylpyrimidine phosphate synthase</fullName>
        <shortName evidence="1">HMP-P synthase</shortName>
        <shortName evidence="1">HMP-phosphate synthase</shortName>
        <shortName evidence="1">HMPP synthase</shortName>
    </alternativeName>
    <alternativeName>
        <fullName evidence="1">Thiamine biosynthesis protein ThiC</fullName>
    </alternativeName>
</protein>